<feature type="transit peptide" description="Chloroplast" evidence="1">
    <location>
        <begin position="1"/>
        <end position="45"/>
    </location>
</feature>
<feature type="chain" id="PRO_0000005018" description="RuBisCO large subunit-binding protein subunit alpha, chloroplastic">
    <location>
        <begin position="46"/>
        <end position="583"/>
    </location>
</feature>
<feature type="region of interest" description="Disordered" evidence="3">
    <location>
        <begin position="1"/>
        <end position="35"/>
    </location>
</feature>
<feature type="compositionally biased region" description="Polar residues" evidence="3">
    <location>
        <begin position="1"/>
        <end position="14"/>
    </location>
</feature>
<feature type="compositionally biased region" description="Low complexity" evidence="3">
    <location>
        <begin position="15"/>
        <end position="31"/>
    </location>
</feature>
<feature type="modified residue" description="Phosphoserine" evidence="2">
    <location>
        <position position="89"/>
    </location>
</feature>
<dbReference type="EMBL" id="Z27222">
    <property type="protein sequence ID" value="CAA81736.1"/>
    <property type="molecule type" value="mRNA"/>
</dbReference>
<dbReference type="PIR" id="S38642">
    <property type="entry name" value="S38642"/>
</dbReference>
<dbReference type="RefSeq" id="NP_001303090.1">
    <property type="nucleotide sequence ID" value="NM_001316161.1"/>
</dbReference>
<dbReference type="SMR" id="P34794"/>
<dbReference type="GeneID" id="106352579"/>
<dbReference type="KEGG" id="bna:106352579"/>
<dbReference type="OrthoDB" id="1081762at2759"/>
<dbReference type="GO" id="GO:0009507">
    <property type="term" value="C:chloroplast"/>
    <property type="evidence" value="ECO:0007669"/>
    <property type="project" value="UniProtKB-SubCell"/>
</dbReference>
<dbReference type="GO" id="GO:0005524">
    <property type="term" value="F:ATP binding"/>
    <property type="evidence" value="ECO:0007669"/>
    <property type="project" value="UniProtKB-KW"/>
</dbReference>
<dbReference type="GO" id="GO:0140662">
    <property type="term" value="F:ATP-dependent protein folding chaperone"/>
    <property type="evidence" value="ECO:0007669"/>
    <property type="project" value="InterPro"/>
</dbReference>
<dbReference type="GO" id="GO:0042026">
    <property type="term" value="P:protein refolding"/>
    <property type="evidence" value="ECO:0007669"/>
    <property type="project" value="InterPro"/>
</dbReference>
<dbReference type="CDD" id="cd03344">
    <property type="entry name" value="GroEL"/>
    <property type="match status" value="1"/>
</dbReference>
<dbReference type="FunFam" id="3.50.7.10:FF:000001">
    <property type="entry name" value="60 kDa chaperonin"/>
    <property type="match status" value="1"/>
</dbReference>
<dbReference type="Gene3D" id="3.50.7.10">
    <property type="entry name" value="GroEL"/>
    <property type="match status" value="1"/>
</dbReference>
<dbReference type="Gene3D" id="1.10.560.10">
    <property type="entry name" value="GroEL-like equatorial domain"/>
    <property type="match status" value="1"/>
</dbReference>
<dbReference type="Gene3D" id="3.30.260.10">
    <property type="entry name" value="TCP-1-like chaperonin intermediate domain"/>
    <property type="match status" value="1"/>
</dbReference>
<dbReference type="HAMAP" id="MF_00600">
    <property type="entry name" value="CH60"/>
    <property type="match status" value="1"/>
</dbReference>
<dbReference type="InterPro" id="IPR018370">
    <property type="entry name" value="Chaperonin_Cpn60_CS"/>
</dbReference>
<dbReference type="InterPro" id="IPR001844">
    <property type="entry name" value="Cpn60/GroEL"/>
</dbReference>
<dbReference type="InterPro" id="IPR002423">
    <property type="entry name" value="Cpn60/GroEL/TCP-1"/>
</dbReference>
<dbReference type="InterPro" id="IPR027409">
    <property type="entry name" value="GroEL-like_apical_dom_sf"/>
</dbReference>
<dbReference type="InterPro" id="IPR027413">
    <property type="entry name" value="GROEL-like_equatorial_sf"/>
</dbReference>
<dbReference type="InterPro" id="IPR027410">
    <property type="entry name" value="TCP-1-like_intermed_sf"/>
</dbReference>
<dbReference type="NCBIfam" id="TIGR02348">
    <property type="entry name" value="GroEL"/>
    <property type="match status" value="1"/>
</dbReference>
<dbReference type="NCBIfam" id="NF000592">
    <property type="entry name" value="PRK00013.1"/>
    <property type="match status" value="1"/>
</dbReference>
<dbReference type="NCBIfam" id="NF009487">
    <property type="entry name" value="PRK12849.1"/>
    <property type="match status" value="1"/>
</dbReference>
<dbReference type="NCBIfam" id="NF009488">
    <property type="entry name" value="PRK12850.1"/>
    <property type="match status" value="1"/>
</dbReference>
<dbReference type="NCBIfam" id="NF009489">
    <property type="entry name" value="PRK12851.1"/>
    <property type="match status" value="1"/>
</dbReference>
<dbReference type="PANTHER" id="PTHR45633">
    <property type="entry name" value="60 KDA HEAT SHOCK PROTEIN, MITOCHONDRIAL"/>
    <property type="match status" value="1"/>
</dbReference>
<dbReference type="Pfam" id="PF00118">
    <property type="entry name" value="Cpn60_TCP1"/>
    <property type="match status" value="1"/>
</dbReference>
<dbReference type="PRINTS" id="PR00298">
    <property type="entry name" value="CHAPERONIN60"/>
</dbReference>
<dbReference type="SUPFAM" id="SSF52029">
    <property type="entry name" value="GroEL apical domain-like"/>
    <property type="match status" value="1"/>
</dbReference>
<dbReference type="SUPFAM" id="SSF48592">
    <property type="entry name" value="GroEL equatorial domain-like"/>
    <property type="match status" value="1"/>
</dbReference>
<dbReference type="SUPFAM" id="SSF54849">
    <property type="entry name" value="GroEL-intermediate domain like"/>
    <property type="match status" value="1"/>
</dbReference>
<dbReference type="PROSITE" id="PS00296">
    <property type="entry name" value="CHAPERONINS_CPN60"/>
    <property type="match status" value="1"/>
</dbReference>
<organism>
    <name type="scientific">Brassica napus</name>
    <name type="common">Rape</name>
    <dbReference type="NCBI Taxonomy" id="3708"/>
    <lineage>
        <taxon>Eukaryota</taxon>
        <taxon>Viridiplantae</taxon>
        <taxon>Streptophyta</taxon>
        <taxon>Embryophyta</taxon>
        <taxon>Tracheophyta</taxon>
        <taxon>Spermatophyta</taxon>
        <taxon>Magnoliopsida</taxon>
        <taxon>eudicotyledons</taxon>
        <taxon>Gunneridae</taxon>
        <taxon>Pentapetalae</taxon>
        <taxon>rosids</taxon>
        <taxon>malvids</taxon>
        <taxon>Brassicales</taxon>
        <taxon>Brassicaceae</taxon>
        <taxon>Brassiceae</taxon>
        <taxon>Brassica</taxon>
    </lineage>
</organism>
<keyword id="KW-0067">ATP-binding</keyword>
<keyword id="KW-0143">Chaperone</keyword>
<keyword id="KW-0150">Chloroplast</keyword>
<keyword id="KW-0547">Nucleotide-binding</keyword>
<keyword id="KW-0597">Phosphoprotein</keyword>
<keyword id="KW-0934">Plastid</keyword>
<keyword id="KW-0809">Transit peptide</keyword>
<accession>P34794</accession>
<name>RUB2_BRANA</name>
<proteinExistence type="evidence at transcript level"/>
<protein>
    <recommendedName>
        <fullName>RuBisCO large subunit-binding protein subunit alpha, chloroplastic</fullName>
    </recommendedName>
    <alternativeName>
        <fullName>60 kDa chaperonin subunit alpha</fullName>
    </alternativeName>
    <alternativeName>
        <fullName>CPN-60 alpha</fullName>
    </alternativeName>
</protein>
<evidence type="ECO:0000250" key="1"/>
<evidence type="ECO:0000250" key="2">
    <source>
        <dbReference type="UniProtKB" id="P21238"/>
    </source>
</evidence>
<evidence type="ECO:0000256" key="3">
    <source>
        <dbReference type="SAM" id="MobiDB-lite"/>
    </source>
</evidence>
<evidence type="ECO:0000305" key="4"/>
<reference key="1">
    <citation type="journal article" date="1994" name="Plant Physiol.">
        <title>Isolation of a full-length cDNA encoding Brassica napus plastid chaperonin-60 alpha subunit.</title>
        <authorList>
            <person name="Cole K.P."/>
            <person name="Blakeley S.D."/>
            <person name="Dennis D.T."/>
        </authorList>
    </citation>
    <scope>NUCLEOTIDE SEQUENCE [MRNA]</scope>
    <source>
        <tissue>Seed</tissue>
    </source>
</reference>
<comment type="function">
    <text>This protein binds RuBisCO small and large subunits and is implicated in the assembly of the enzyme oligomer.</text>
</comment>
<comment type="subunit">
    <text>Oligomer of probably six alpha and six beta subunits.</text>
</comment>
<comment type="subcellular location">
    <subcellularLocation>
        <location>Plastid</location>
        <location>Chloroplast</location>
    </subcellularLocation>
</comment>
<comment type="miscellaneous">
    <text>This protein shows ATPase activity.</text>
</comment>
<comment type="similarity">
    <text evidence="4">Belongs to the chaperonin (HSP60) family.</text>
</comment>
<sequence>MATANALSSPSVLCSSRQGKLSGGSQQKGQRVSYRKANRRFSLRANVKEIAFDQSSRAALQAGIDKLADAVGLTLGPRGRNVVLDEFGSPKVVNDGVTIARAIELPDAMENAGAALIREVASKTNDSAGDGTTTASVLAREIIKHGLLSVTSGANPVSLKRGIDKTVQALIEELEKRSRPVKGGRDIKAVATISAGNDELIGAMIADAIDKVGPDGVSPIESSSSFETTVEVEEGMEIDRGYISPQFVTNPEKLLVEFENARVLITDQKITAIKDIIPILEKTTQLRAPLLIIAEDVTGEALATLVVNKLRGVLNVVAVKAPGFGERRKAMLQDIAILTEPSTALDMGLLVENTTIDQLGIARKVTISKDSTTLIADAASKAELQARISQLKKESFETDSVYDSEKLAERIAKLSGGVAVIKVGAATETELEDRKLRIEDAKNATFAAIEEGIVPGGGATLVHLSTVIPAIKETFEDADVRLGADIVQKALVAQSLIAQNAGIEGEVVVEKIMFSEWELGYNAMTDTYENLLEAGVIDPAKVTRCALQNAASVAGMVLTTQAIVVDKPKPKAPAAAAPEGLMV</sequence>